<evidence type="ECO:0000255" key="1">
    <source>
        <dbReference type="HAMAP-Rule" id="MF_00054"/>
    </source>
</evidence>
<comment type="function">
    <text evidence="1">Catalyzes the GTP-dependent ribosomal translocation step during translation elongation. During this step, the ribosome changes from the pre-translocational (PRE) to the post-translocational (POST) state as the newly formed A-site-bound peptidyl-tRNA and P-site-bound deacylated tRNA move to the P and E sites, respectively. Catalyzes the coordinated movement of the two tRNA molecules, the mRNA and conformational changes in the ribosome.</text>
</comment>
<comment type="subcellular location">
    <subcellularLocation>
        <location evidence="1">Cytoplasm</location>
    </subcellularLocation>
</comment>
<comment type="similarity">
    <text evidence="1">Belongs to the TRAFAC class translation factor GTPase superfamily. Classic translation factor GTPase family. EF-G/EF-2 subfamily.</text>
</comment>
<proteinExistence type="inferred from homology"/>
<organism>
    <name type="scientific">Neorickettsia sennetsu (strain ATCC VR-367 / Miyayama)</name>
    <name type="common">Ehrlichia sennetsu</name>
    <dbReference type="NCBI Taxonomy" id="222891"/>
    <lineage>
        <taxon>Bacteria</taxon>
        <taxon>Pseudomonadati</taxon>
        <taxon>Pseudomonadota</taxon>
        <taxon>Alphaproteobacteria</taxon>
        <taxon>Rickettsiales</taxon>
        <taxon>Anaplasmataceae</taxon>
        <taxon>Neorickettsia</taxon>
    </lineage>
</organism>
<dbReference type="EMBL" id="CP000237">
    <property type="protein sequence ID" value="ABD45870.1"/>
    <property type="molecule type" value="Genomic_DNA"/>
</dbReference>
<dbReference type="RefSeq" id="WP_011452070.1">
    <property type="nucleotide sequence ID" value="NC_007798.1"/>
</dbReference>
<dbReference type="SMR" id="Q2GD82"/>
<dbReference type="STRING" id="222891.NSE_0687"/>
<dbReference type="KEGG" id="nse:NSE_0687"/>
<dbReference type="eggNOG" id="COG0480">
    <property type="taxonomic scope" value="Bacteria"/>
</dbReference>
<dbReference type="HOGENOM" id="CLU_002794_4_1_5"/>
<dbReference type="OrthoDB" id="9802948at2"/>
<dbReference type="Proteomes" id="UP000001942">
    <property type="component" value="Chromosome"/>
</dbReference>
<dbReference type="GO" id="GO:0005737">
    <property type="term" value="C:cytoplasm"/>
    <property type="evidence" value="ECO:0007669"/>
    <property type="project" value="UniProtKB-SubCell"/>
</dbReference>
<dbReference type="GO" id="GO:0005525">
    <property type="term" value="F:GTP binding"/>
    <property type="evidence" value="ECO:0007669"/>
    <property type="project" value="UniProtKB-UniRule"/>
</dbReference>
<dbReference type="GO" id="GO:0003924">
    <property type="term" value="F:GTPase activity"/>
    <property type="evidence" value="ECO:0007669"/>
    <property type="project" value="InterPro"/>
</dbReference>
<dbReference type="GO" id="GO:0003746">
    <property type="term" value="F:translation elongation factor activity"/>
    <property type="evidence" value="ECO:0007669"/>
    <property type="project" value="UniProtKB-UniRule"/>
</dbReference>
<dbReference type="GO" id="GO:0032790">
    <property type="term" value="P:ribosome disassembly"/>
    <property type="evidence" value="ECO:0007669"/>
    <property type="project" value="TreeGrafter"/>
</dbReference>
<dbReference type="CDD" id="cd01886">
    <property type="entry name" value="EF-G"/>
    <property type="match status" value="1"/>
</dbReference>
<dbReference type="CDD" id="cd16262">
    <property type="entry name" value="EFG_III"/>
    <property type="match status" value="1"/>
</dbReference>
<dbReference type="CDD" id="cd01434">
    <property type="entry name" value="EFG_mtEFG1_IV"/>
    <property type="match status" value="1"/>
</dbReference>
<dbReference type="CDD" id="cd03713">
    <property type="entry name" value="EFG_mtEFG_C"/>
    <property type="match status" value="1"/>
</dbReference>
<dbReference type="CDD" id="cd04088">
    <property type="entry name" value="EFG_mtEFG_II"/>
    <property type="match status" value="1"/>
</dbReference>
<dbReference type="FunFam" id="2.40.30.10:FF:000006">
    <property type="entry name" value="Elongation factor G"/>
    <property type="match status" value="1"/>
</dbReference>
<dbReference type="FunFam" id="3.30.230.10:FF:000003">
    <property type="entry name" value="Elongation factor G"/>
    <property type="match status" value="1"/>
</dbReference>
<dbReference type="FunFam" id="3.30.70.240:FF:000001">
    <property type="entry name" value="Elongation factor G"/>
    <property type="match status" value="1"/>
</dbReference>
<dbReference type="FunFam" id="3.30.70.870:FF:000001">
    <property type="entry name" value="Elongation factor G"/>
    <property type="match status" value="1"/>
</dbReference>
<dbReference type="FunFam" id="3.40.50.300:FF:000029">
    <property type="entry name" value="Elongation factor G"/>
    <property type="match status" value="1"/>
</dbReference>
<dbReference type="Gene3D" id="3.30.230.10">
    <property type="match status" value="1"/>
</dbReference>
<dbReference type="Gene3D" id="3.30.70.240">
    <property type="match status" value="1"/>
</dbReference>
<dbReference type="Gene3D" id="3.30.70.870">
    <property type="entry name" value="Elongation Factor G (Translational Gtpase), domain 3"/>
    <property type="match status" value="1"/>
</dbReference>
<dbReference type="Gene3D" id="3.40.50.300">
    <property type="entry name" value="P-loop containing nucleotide triphosphate hydrolases"/>
    <property type="match status" value="1"/>
</dbReference>
<dbReference type="Gene3D" id="2.40.30.10">
    <property type="entry name" value="Translation factors"/>
    <property type="match status" value="1"/>
</dbReference>
<dbReference type="HAMAP" id="MF_00054_B">
    <property type="entry name" value="EF_G_EF_2_B"/>
    <property type="match status" value="1"/>
</dbReference>
<dbReference type="InterPro" id="IPR053905">
    <property type="entry name" value="EF-G-like_DII"/>
</dbReference>
<dbReference type="InterPro" id="IPR041095">
    <property type="entry name" value="EFG_II"/>
</dbReference>
<dbReference type="InterPro" id="IPR009022">
    <property type="entry name" value="EFG_III"/>
</dbReference>
<dbReference type="InterPro" id="IPR035647">
    <property type="entry name" value="EFG_III/V"/>
</dbReference>
<dbReference type="InterPro" id="IPR047872">
    <property type="entry name" value="EFG_IV"/>
</dbReference>
<dbReference type="InterPro" id="IPR035649">
    <property type="entry name" value="EFG_V"/>
</dbReference>
<dbReference type="InterPro" id="IPR000640">
    <property type="entry name" value="EFG_V-like"/>
</dbReference>
<dbReference type="InterPro" id="IPR031157">
    <property type="entry name" value="G_TR_CS"/>
</dbReference>
<dbReference type="InterPro" id="IPR027417">
    <property type="entry name" value="P-loop_NTPase"/>
</dbReference>
<dbReference type="InterPro" id="IPR020568">
    <property type="entry name" value="Ribosomal_Su5_D2-typ_SF"/>
</dbReference>
<dbReference type="InterPro" id="IPR014721">
    <property type="entry name" value="Ribsml_uS5_D2-typ_fold_subgr"/>
</dbReference>
<dbReference type="InterPro" id="IPR005225">
    <property type="entry name" value="Small_GTP-bd"/>
</dbReference>
<dbReference type="InterPro" id="IPR000795">
    <property type="entry name" value="T_Tr_GTP-bd_dom"/>
</dbReference>
<dbReference type="InterPro" id="IPR009000">
    <property type="entry name" value="Transl_B-barrel_sf"/>
</dbReference>
<dbReference type="InterPro" id="IPR004540">
    <property type="entry name" value="Transl_elong_EFG/EF2"/>
</dbReference>
<dbReference type="InterPro" id="IPR005517">
    <property type="entry name" value="Transl_elong_EFG/EF2_IV"/>
</dbReference>
<dbReference type="NCBIfam" id="TIGR00484">
    <property type="entry name" value="EF-G"/>
    <property type="match status" value="1"/>
</dbReference>
<dbReference type="NCBIfam" id="NF009381">
    <property type="entry name" value="PRK12740.1-5"/>
    <property type="match status" value="1"/>
</dbReference>
<dbReference type="NCBIfam" id="TIGR00231">
    <property type="entry name" value="small_GTP"/>
    <property type="match status" value="1"/>
</dbReference>
<dbReference type="PANTHER" id="PTHR43261:SF1">
    <property type="entry name" value="RIBOSOME-RELEASING FACTOR 2, MITOCHONDRIAL"/>
    <property type="match status" value="1"/>
</dbReference>
<dbReference type="PANTHER" id="PTHR43261">
    <property type="entry name" value="TRANSLATION ELONGATION FACTOR G-RELATED"/>
    <property type="match status" value="1"/>
</dbReference>
<dbReference type="Pfam" id="PF22042">
    <property type="entry name" value="EF-G_D2"/>
    <property type="match status" value="1"/>
</dbReference>
<dbReference type="Pfam" id="PF00679">
    <property type="entry name" value="EFG_C"/>
    <property type="match status" value="1"/>
</dbReference>
<dbReference type="Pfam" id="PF14492">
    <property type="entry name" value="EFG_III"/>
    <property type="match status" value="1"/>
</dbReference>
<dbReference type="Pfam" id="PF03764">
    <property type="entry name" value="EFG_IV"/>
    <property type="match status" value="1"/>
</dbReference>
<dbReference type="Pfam" id="PF00009">
    <property type="entry name" value="GTP_EFTU"/>
    <property type="match status" value="1"/>
</dbReference>
<dbReference type="PRINTS" id="PR00315">
    <property type="entry name" value="ELONGATNFCT"/>
</dbReference>
<dbReference type="SMART" id="SM00838">
    <property type="entry name" value="EFG_C"/>
    <property type="match status" value="1"/>
</dbReference>
<dbReference type="SMART" id="SM00889">
    <property type="entry name" value="EFG_IV"/>
    <property type="match status" value="1"/>
</dbReference>
<dbReference type="SUPFAM" id="SSF54980">
    <property type="entry name" value="EF-G C-terminal domain-like"/>
    <property type="match status" value="2"/>
</dbReference>
<dbReference type="SUPFAM" id="SSF52540">
    <property type="entry name" value="P-loop containing nucleoside triphosphate hydrolases"/>
    <property type="match status" value="1"/>
</dbReference>
<dbReference type="SUPFAM" id="SSF54211">
    <property type="entry name" value="Ribosomal protein S5 domain 2-like"/>
    <property type="match status" value="1"/>
</dbReference>
<dbReference type="SUPFAM" id="SSF50447">
    <property type="entry name" value="Translation proteins"/>
    <property type="match status" value="1"/>
</dbReference>
<dbReference type="PROSITE" id="PS00301">
    <property type="entry name" value="G_TR_1"/>
    <property type="match status" value="1"/>
</dbReference>
<dbReference type="PROSITE" id="PS51722">
    <property type="entry name" value="G_TR_2"/>
    <property type="match status" value="1"/>
</dbReference>
<protein>
    <recommendedName>
        <fullName evidence="1">Elongation factor G</fullName>
        <shortName evidence="1">EF-G</shortName>
    </recommendedName>
</protein>
<name>EFG_NEOSM</name>
<gene>
    <name evidence="1" type="primary">fusA</name>
    <name type="ordered locus">NSE_0687</name>
</gene>
<reference key="1">
    <citation type="journal article" date="2006" name="PLoS Genet.">
        <title>Comparative genomics of emerging human ehrlichiosis agents.</title>
        <authorList>
            <person name="Dunning Hotopp J.C."/>
            <person name="Lin M."/>
            <person name="Madupu R."/>
            <person name="Crabtree J."/>
            <person name="Angiuoli S.V."/>
            <person name="Eisen J.A."/>
            <person name="Seshadri R."/>
            <person name="Ren Q."/>
            <person name="Wu M."/>
            <person name="Utterback T.R."/>
            <person name="Smith S."/>
            <person name="Lewis M."/>
            <person name="Khouri H."/>
            <person name="Zhang C."/>
            <person name="Niu H."/>
            <person name="Lin Q."/>
            <person name="Ohashi N."/>
            <person name="Zhi N."/>
            <person name="Nelson W.C."/>
            <person name="Brinkac L.M."/>
            <person name="Dodson R.J."/>
            <person name="Rosovitz M.J."/>
            <person name="Sundaram J.P."/>
            <person name="Daugherty S.C."/>
            <person name="Davidsen T."/>
            <person name="Durkin A.S."/>
            <person name="Gwinn M.L."/>
            <person name="Haft D.H."/>
            <person name="Selengut J.D."/>
            <person name="Sullivan S.A."/>
            <person name="Zafar N."/>
            <person name="Zhou L."/>
            <person name="Benahmed F."/>
            <person name="Forberger H."/>
            <person name="Halpin R."/>
            <person name="Mulligan S."/>
            <person name="Robinson J."/>
            <person name="White O."/>
            <person name="Rikihisa Y."/>
            <person name="Tettelin H."/>
        </authorList>
    </citation>
    <scope>NUCLEOTIDE SEQUENCE [LARGE SCALE GENOMIC DNA]</scope>
    <source>
        <strain>ATCC VR-367 / Miyayama</strain>
    </source>
</reference>
<accession>Q2GD82</accession>
<sequence>MSASSVELEKIRNIGIMAHIDAGKTTTTERILLYTGVNRTVGEVHEGAATMDWMEQEKERGITITSAATTCWWKGAKINIIDTPGHVDFTIEVERSLRVLDGAVAVFDGVAGVEPQSETVWRQADKHNVPRLCFVNKMDRMGADFYRCAEMLVSKLSANPVILQLPIGVSESFVGVVDLVKMQAIYWQGDDFGAKFEYREIPADLAEQAALYREKLMEKIAETDDKFMDKYFGGEEISEEEIRAAIRAGTIGYHFVPVLCGSAFKNKGVQPLLDAVVDYLPSPVDTKDIIGENEKGEEINIKPDPKAPFVGLAFKVMNDPYVGSLTFVRIYSGTLNSGDVVINSHGDNKERIGRMLLMHANSREDVKSETAGNIVALAGLKNTSTGDTLCASGKVLTLERISAPDPVIEIAVEPKSTAEQEKMALAVARLCAEDPSLKVASNEETGQTLLRGMGELHLEIILDRLKREFNVNVNVGDPQVAYRETITQSYEIDYTHKKQTGGAGQFARVKMLFEPYDDGEFLFESKITGGAIPKEYIPGVEKGLVSVKNKGLLANYPIIGFKVTLMDGAFHDVDSSVLAFEIAARDAFKEAAKKLGLKIMEPLMRVEIVTPEEYTGTVIGDLNSRRGKIAEMEAKGNARVISGVVPLSRMFGYVNDLRSSTQGRASYSMEFKEYAKMPDHIAAELVDKRVAN</sequence>
<feature type="chain" id="PRO_0000263476" description="Elongation factor G">
    <location>
        <begin position="1"/>
        <end position="692"/>
    </location>
</feature>
<feature type="domain" description="tr-type G">
    <location>
        <begin position="9"/>
        <end position="284"/>
    </location>
</feature>
<feature type="binding site" evidence="1">
    <location>
        <begin position="18"/>
        <end position="25"/>
    </location>
    <ligand>
        <name>GTP</name>
        <dbReference type="ChEBI" id="CHEBI:37565"/>
    </ligand>
</feature>
<feature type="binding site" evidence="1">
    <location>
        <begin position="82"/>
        <end position="86"/>
    </location>
    <ligand>
        <name>GTP</name>
        <dbReference type="ChEBI" id="CHEBI:37565"/>
    </ligand>
</feature>
<feature type="binding site" evidence="1">
    <location>
        <begin position="136"/>
        <end position="139"/>
    </location>
    <ligand>
        <name>GTP</name>
        <dbReference type="ChEBI" id="CHEBI:37565"/>
    </ligand>
</feature>
<keyword id="KW-0963">Cytoplasm</keyword>
<keyword id="KW-0251">Elongation factor</keyword>
<keyword id="KW-0342">GTP-binding</keyword>
<keyword id="KW-0547">Nucleotide-binding</keyword>
<keyword id="KW-0648">Protein biosynthesis</keyword>